<keyword id="KW-1035">Host cytoplasm</keyword>
<keyword id="KW-0426">Late protein</keyword>
<keyword id="KW-1185">Reference proteome</keyword>
<keyword id="KW-0946">Virion</keyword>
<organism>
    <name type="scientific">Vaccinia virus (strain Western Reserve)</name>
    <name type="common">VACV</name>
    <name type="synonym">Vaccinia virus (strain WR)</name>
    <dbReference type="NCBI Taxonomy" id="10254"/>
    <lineage>
        <taxon>Viruses</taxon>
        <taxon>Varidnaviria</taxon>
        <taxon>Bamfordvirae</taxon>
        <taxon>Nucleocytoviricota</taxon>
        <taxon>Pokkesviricetes</taxon>
        <taxon>Chitovirales</taxon>
        <taxon>Poxviridae</taxon>
        <taxon>Chordopoxvirinae</taxon>
        <taxon>Orthopoxvirus</taxon>
        <taxon>Vaccinia virus</taxon>
    </lineage>
</organism>
<proteinExistence type="evidence at transcript level"/>
<name>PG091_VACCW</name>
<comment type="function">
    <text evidence="1">Contributes to vaccinia virus virulence in mice but not to replication in cell culture.</text>
</comment>
<comment type="subcellular location">
    <subcellularLocation>
        <location evidence="1">Virion</location>
    </subcellularLocation>
    <subcellularLocation>
        <location evidence="1">Host cytoplasm</location>
    </subcellularLocation>
    <text evidence="1">Localized to the interior of virions, primarily between the membrane and core.</text>
</comment>
<comment type="induction">
    <text evidence="2">Expressed in the late phase of the viral replicative cycle.</text>
</comment>
<comment type="miscellaneous">
    <text evidence="4">Displays sequence similarity with a group of bacterial permuted NlpC/P60 proteins. Thus, the ancestor of the OPG091 gene might have been acquired from a bacterial source at the onset of poxvirus evolution.</text>
</comment>
<comment type="similarity">
    <text evidence="3">Belongs to the orthopoxvirus OPG091 family.</text>
</comment>
<reference key="1">
    <citation type="submission" date="2003-02" db="EMBL/GenBank/DDBJ databases">
        <title>Sequencing of the coding region of Vaccinia-WR to an average 9-fold redundancy and an error rate of 0.16/10kb.</title>
        <authorList>
            <person name="Esposito J.J."/>
            <person name="Frace A.M."/>
            <person name="Sammons S.A."/>
            <person name="Olsen-Rasmussen M."/>
            <person name="Osborne J."/>
            <person name="Wohlhueter R."/>
        </authorList>
    </citation>
    <scope>NUCLEOTIDE SEQUENCE [LARGE SCALE GENOMIC DNA]</scope>
</reference>
<reference key="2">
    <citation type="journal article" date="2008" name="Virology">
        <title>A conserved poxvirus NlpC/P60 superfamily protein contributes to vaccinia virus virulence in mice but not to replication in cell culture.</title>
        <authorList>
            <person name="Senkevich T.G."/>
            <person name="Wyatt L.S."/>
            <person name="Weisberg A.S."/>
            <person name="Koonin E.V."/>
            <person name="Moss B."/>
        </authorList>
    </citation>
    <scope>FUNCTION</scope>
    <scope>SUBCELLULAR LOCATION</scope>
</reference>
<reference key="3">
    <citation type="journal article" date="2015" name="J. Virol.">
        <title>Deciphering poxvirus gene expression by RNA sequencing and ribosome profiling.</title>
        <authorList>
            <person name="Yang Z."/>
            <person name="Cao S."/>
            <person name="Martens C.A."/>
            <person name="Porcella S.F."/>
            <person name="Xie Z."/>
            <person name="Ma M."/>
            <person name="Shen B."/>
            <person name="Moss B."/>
        </authorList>
    </citation>
    <scope>INDUCTION</scope>
</reference>
<protein>
    <recommendedName>
        <fullName>Protein OPG091</fullName>
    </recommendedName>
    <alternativeName>
        <fullName>Protein G6</fullName>
    </alternativeName>
</protein>
<organismHost>
    <name type="scientific">Bos taurus</name>
    <name type="common">Bovine</name>
    <dbReference type="NCBI Taxonomy" id="9913"/>
</organismHost>
<feature type="chain" id="PRO_0000412755" description="Protein OPG091">
    <location>
        <begin position="1"/>
        <end position="165"/>
    </location>
</feature>
<accession>Q80HW9</accession>
<sequence>MDPVNFIKTYAPRGSIIFINYTMSLTSHLNPSIEKHVGIYYGTLLSEHLVVESTYRKGVRIVPLDSFFEGYLSAKVYMLENIQVMKIAADTSLTLLGIPYGFGHDRMYCFKLVADCYKNAGIDTSSKRILGKDIFLSQNFTDDNRWIKIYDSNNLTFWQIDYLKG</sequence>
<evidence type="ECO:0000269" key="1">
    <source>
    </source>
</evidence>
<evidence type="ECO:0000269" key="2">
    <source>
    </source>
</evidence>
<evidence type="ECO:0000305" key="3"/>
<evidence type="ECO:0000305" key="4">
    <source>
    </source>
</evidence>
<gene>
    <name type="primary">OPG091</name>
    <name type="ordered locus">VACWR084</name>
    <name type="ORF">G6R</name>
</gene>
<dbReference type="EMBL" id="AY243312">
    <property type="protein sequence ID" value="AAO89363.1"/>
    <property type="molecule type" value="Genomic_DNA"/>
</dbReference>
<dbReference type="RefSeq" id="YP_232966.1">
    <property type="nucleotide sequence ID" value="NC_006998.1"/>
</dbReference>
<dbReference type="SMR" id="Q80HW9"/>
<dbReference type="DNASU" id="3707540"/>
<dbReference type="GeneID" id="3707540"/>
<dbReference type="KEGG" id="vg:3707540"/>
<dbReference type="Proteomes" id="UP000000344">
    <property type="component" value="Genome"/>
</dbReference>
<dbReference type="GO" id="GO:0030430">
    <property type="term" value="C:host cell cytoplasm"/>
    <property type="evidence" value="ECO:0007669"/>
    <property type="project" value="UniProtKB-SubCell"/>
</dbReference>
<dbReference type="GO" id="GO:0044423">
    <property type="term" value="C:virion component"/>
    <property type="evidence" value="ECO:0007669"/>
    <property type="project" value="UniProtKB-KW"/>
</dbReference>
<dbReference type="Gene3D" id="3.90.1720.10">
    <property type="entry name" value="endopeptidase domain like (from Nostoc punctiforme)"/>
    <property type="match status" value="1"/>
</dbReference>
<dbReference type="InterPro" id="IPR038765">
    <property type="entry name" value="Papain-like_cys_pep_sf"/>
</dbReference>
<dbReference type="InterPro" id="IPR024453">
    <property type="entry name" value="Peptidase_C92"/>
</dbReference>
<dbReference type="Pfam" id="PF05708">
    <property type="entry name" value="Peptidase_C92"/>
    <property type="match status" value="1"/>
</dbReference>
<dbReference type="SUPFAM" id="SSF54001">
    <property type="entry name" value="Cysteine proteinases"/>
    <property type="match status" value="1"/>
</dbReference>